<name>NADD_BAUCH</name>
<organism>
    <name type="scientific">Baumannia cicadellinicola subsp. Homalodisca coagulata</name>
    <dbReference type="NCBI Taxonomy" id="374463"/>
    <lineage>
        <taxon>Bacteria</taxon>
        <taxon>Pseudomonadati</taxon>
        <taxon>Pseudomonadota</taxon>
        <taxon>Gammaproteobacteria</taxon>
        <taxon>Candidatus Palibaumannia</taxon>
    </lineage>
</organism>
<gene>
    <name evidence="1" type="primary">nadD</name>
    <name type="ordered locus">BCI_0234</name>
</gene>
<accession>Q1LTM7</accession>
<proteinExistence type="inferred from homology"/>
<dbReference type="EC" id="2.7.7.18" evidence="1"/>
<dbReference type="EMBL" id="CP000238">
    <property type="protein sequence ID" value="ABF14163.1"/>
    <property type="molecule type" value="Genomic_DNA"/>
</dbReference>
<dbReference type="RefSeq" id="WP_011520420.1">
    <property type="nucleotide sequence ID" value="NC_007984.1"/>
</dbReference>
<dbReference type="SMR" id="Q1LTM7"/>
<dbReference type="STRING" id="374463.BCI_0234"/>
<dbReference type="KEGG" id="bci:BCI_0234"/>
<dbReference type="HOGENOM" id="CLU_069765_0_0_6"/>
<dbReference type="OrthoDB" id="5295945at2"/>
<dbReference type="UniPathway" id="UPA00253">
    <property type="reaction ID" value="UER00332"/>
</dbReference>
<dbReference type="Proteomes" id="UP000002427">
    <property type="component" value="Chromosome"/>
</dbReference>
<dbReference type="GO" id="GO:0005524">
    <property type="term" value="F:ATP binding"/>
    <property type="evidence" value="ECO:0007669"/>
    <property type="project" value="UniProtKB-KW"/>
</dbReference>
<dbReference type="GO" id="GO:0004515">
    <property type="term" value="F:nicotinate-nucleotide adenylyltransferase activity"/>
    <property type="evidence" value="ECO:0007669"/>
    <property type="project" value="UniProtKB-UniRule"/>
</dbReference>
<dbReference type="GO" id="GO:0009435">
    <property type="term" value="P:NAD biosynthetic process"/>
    <property type="evidence" value="ECO:0007669"/>
    <property type="project" value="UniProtKB-UniRule"/>
</dbReference>
<dbReference type="CDD" id="cd02165">
    <property type="entry name" value="NMNAT"/>
    <property type="match status" value="1"/>
</dbReference>
<dbReference type="FunFam" id="3.40.50.620:FF:000039">
    <property type="entry name" value="Probable nicotinate-nucleotide adenylyltransferase"/>
    <property type="match status" value="1"/>
</dbReference>
<dbReference type="Gene3D" id="3.40.50.620">
    <property type="entry name" value="HUPs"/>
    <property type="match status" value="1"/>
</dbReference>
<dbReference type="HAMAP" id="MF_00244">
    <property type="entry name" value="NaMN_adenylyltr"/>
    <property type="match status" value="1"/>
</dbReference>
<dbReference type="InterPro" id="IPR004821">
    <property type="entry name" value="Cyt_trans-like"/>
</dbReference>
<dbReference type="InterPro" id="IPR005248">
    <property type="entry name" value="NadD/NMNAT"/>
</dbReference>
<dbReference type="InterPro" id="IPR014729">
    <property type="entry name" value="Rossmann-like_a/b/a_fold"/>
</dbReference>
<dbReference type="NCBIfam" id="TIGR00125">
    <property type="entry name" value="cyt_tran_rel"/>
    <property type="match status" value="1"/>
</dbReference>
<dbReference type="NCBIfam" id="TIGR00482">
    <property type="entry name" value="nicotinate (nicotinamide) nucleotide adenylyltransferase"/>
    <property type="match status" value="1"/>
</dbReference>
<dbReference type="NCBIfam" id="NF000839">
    <property type="entry name" value="PRK00071.1-1"/>
    <property type="match status" value="1"/>
</dbReference>
<dbReference type="PANTHER" id="PTHR39321">
    <property type="entry name" value="NICOTINATE-NUCLEOTIDE ADENYLYLTRANSFERASE-RELATED"/>
    <property type="match status" value="1"/>
</dbReference>
<dbReference type="PANTHER" id="PTHR39321:SF3">
    <property type="entry name" value="PHOSPHOPANTETHEINE ADENYLYLTRANSFERASE"/>
    <property type="match status" value="1"/>
</dbReference>
<dbReference type="Pfam" id="PF01467">
    <property type="entry name" value="CTP_transf_like"/>
    <property type="match status" value="1"/>
</dbReference>
<dbReference type="SUPFAM" id="SSF52374">
    <property type="entry name" value="Nucleotidylyl transferase"/>
    <property type="match status" value="1"/>
</dbReference>
<feature type="chain" id="PRO_0000310098" description="Probable nicotinate-nucleotide adenylyltransferase">
    <location>
        <begin position="1"/>
        <end position="217"/>
    </location>
</feature>
<comment type="function">
    <text evidence="1">Catalyzes the reversible adenylation of nicotinate mononucleotide (NaMN) to nicotinic acid adenine dinucleotide (NaAD).</text>
</comment>
<comment type="catalytic activity">
    <reaction evidence="1">
        <text>nicotinate beta-D-ribonucleotide + ATP + H(+) = deamido-NAD(+) + diphosphate</text>
        <dbReference type="Rhea" id="RHEA:22860"/>
        <dbReference type="ChEBI" id="CHEBI:15378"/>
        <dbReference type="ChEBI" id="CHEBI:30616"/>
        <dbReference type="ChEBI" id="CHEBI:33019"/>
        <dbReference type="ChEBI" id="CHEBI:57502"/>
        <dbReference type="ChEBI" id="CHEBI:58437"/>
        <dbReference type="EC" id="2.7.7.18"/>
    </reaction>
</comment>
<comment type="pathway">
    <text evidence="1">Cofactor biosynthesis; NAD(+) biosynthesis; deamido-NAD(+) from nicotinate D-ribonucleotide: step 1/1.</text>
</comment>
<comment type="similarity">
    <text evidence="1">Belongs to the NadD family.</text>
</comment>
<protein>
    <recommendedName>
        <fullName evidence="1">Probable nicotinate-nucleotide adenylyltransferase</fullName>
        <ecNumber evidence="1">2.7.7.18</ecNumber>
    </recommendedName>
    <alternativeName>
        <fullName evidence="1">Deamido-NAD(+) diphosphorylase</fullName>
    </alternativeName>
    <alternativeName>
        <fullName evidence="1">Deamido-NAD(+) pyrophosphorylase</fullName>
    </alternativeName>
    <alternativeName>
        <fullName evidence="1">Nicotinate mononucleotide adenylyltransferase</fullName>
        <shortName evidence="1">NaMN adenylyltransferase</shortName>
    </alternativeName>
</protein>
<sequence>MAKRLLTAFYGGTFDPIHHGHLQPVIALAQLVNLKQVILLPNHIPLHRPLPKATPQQRLRMTRLAIADTPGKLFVIDERELRRNTPSWTVETFKVLRSEYGPMAPLGLIIGQDSLLTLPQWHRSQELFELCHILVCARPGYQYGIAGYKNNNWMEYRFTDDPSALNYQPAGLVYCAETPELAISASDIRGRVHAILPYYDLLTHSVHAYINKQGLYR</sequence>
<evidence type="ECO:0000255" key="1">
    <source>
        <dbReference type="HAMAP-Rule" id="MF_00244"/>
    </source>
</evidence>
<reference key="1">
    <citation type="journal article" date="2006" name="PLoS Biol.">
        <title>Metabolic complementarity and genomics of the dual bacterial symbiosis of sharpshooters.</title>
        <authorList>
            <person name="Wu D."/>
            <person name="Daugherty S.C."/>
            <person name="Van Aken S.E."/>
            <person name="Pai G.H."/>
            <person name="Watkins K.L."/>
            <person name="Khouri H."/>
            <person name="Tallon L.J."/>
            <person name="Zaborsky J.M."/>
            <person name="Dunbar H.E."/>
            <person name="Tran P.L."/>
            <person name="Moran N.A."/>
            <person name="Eisen J.A."/>
        </authorList>
    </citation>
    <scope>NUCLEOTIDE SEQUENCE [LARGE SCALE GENOMIC DNA]</scope>
</reference>
<keyword id="KW-0067">ATP-binding</keyword>
<keyword id="KW-0520">NAD</keyword>
<keyword id="KW-0547">Nucleotide-binding</keyword>
<keyword id="KW-0548">Nucleotidyltransferase</keyword>
<keyword id="KW-0662">Pyridine nucleotide biosynthesis</keyword>
<keyword id="KW-1185">Reference proteome</keyword>
<keyword id="KW-0808">Transferase</keyword>